<dbReference type="EMBL" id="BC095234">
    <property type="protein sequence ID" value="AAH95234.1"/>
    <property type="molecule type" value="mRNA"/>
</dbReference>
<dbReference type="RefSeq" id="NP_001018423.1">
    <property type="nucleotide sequence ID" value="NM_001020587.1"/>
</dbReference>
<dbReference type="SMR" id="Q503P5"/>
<dbReference type="FunCoup" id="Q503P5">
    <property type="interactions" value="236"/>
</dbReference>
<dbReference type="PaxDb" id="7955-ENSDARP00000107054"/>
<dbReference type="GeneID" id="103908782"/>
<dbReference type="KEGG" id="dre:103908782"/>
<dbReference type="AGR" id="ZFIN:ZDB-GENE-050522-300"/>
<dbReference type="CTD" id="84179"/>
<dbReference type="ZFIN" id="ZDB-GENE-050522-300">
    <property type="gene designation" value="slc49a3"/>
</dbReference>
<dbReference type="InParanoid" id="Q503P5"/>
<dbReference type="OrthoDB" id="422206at2759"/>
<dbReference type="PhylomeDB" id="Q503P5"/>
<dbReference type="PRO" id="PR:Q503P5"/>
<dbReference type="Proteomes" id="UP000000437">
    <property type="component" value="Unplaced"/>
</dbReference>
<dbReference type="GO" id="GO:0016020">
    <property type="term" value="C:membrane"/>
    <property type="evidence" value="ECO:0000318"/>
    <property type="project" value="GO_Central"/>
</dbReference>
<dbReference type="GO" id="GO:0022857">
    <property type="term" value="F:transmembrane transporter activity"/>
    <property type="evidence" value="ECO:0007669"/>
    <property type="project" value="InterPro"/>
</dbReference>
<dbReference type="CDD" id="cd17399">
    <property type="entry name" value="MFS_MFSD7"/>
    <property type="match status" value="1"/>
</dbReference>
<dbReference type="Gene3D" id="1.20.1250.20">
    <property type="entry name" value="MFS general substrate transporter like domains"/>
    <property type="match status" value="2"/>
</dbReference>
<dbReference type="InterPro" id="IPR049680">
    <property type="entry name" value="FLVCR1-2_SLC49-like"/>
</dbReference>
<dbReference type="InterPro" id="IPR011701">
    <property type="entry name" value="MFS"/>
</dbReference>
<dbReference type="InterPro" id="IPR036259">
    <property type="entry name" value="MFS_trans_sf"/>
</dbReference>
<dbReference type="PANTHER" id="PTHR10924">
    <property type="entry name" value="MAJOR FACILITATOR SUPERFAMILY PROTEIN-RELATED"/>
    <property type="match status" value="1"/>
</dbReference>
<dbReference type="PANTHER" id="PTHR10924:SF6">
    <property type="entry name" value="SOLUTE CARRIER FAMILY 49 MEMBER A3"/>
    <property type="match status" value="1"/>
</dbReference>
<dbReference type="Pfam" id="PF07690">
    <property type="entry name" value="MFS_1"/>
    <property type="match status" value="1"/>
</dbReference>
<dbReference type="SUPFAM" id="SSF103473">
    <property type="entry name" value="MFS general substrate transporter"/>
    <property type="match status" value="1"/>
</dbReference>
<feature type="chain" id="PRO_0000273410" description="Solute carrier family 49 member A3">
    <location>
        <begin position="1"/>
        <end position="474"/>
    </location>
</feature>
<feature type="transmembrane region" description="Helical" evidence="1">
    <location>
        <begin position="38"/>
        <end position="58"/>
    </location>
</feature>
<feature type="transmembrane region" description="Helical" evidence="1">
    <location>
        <begin position="69"/>
        <end position="89"/>
    </location>
</feature>
<feature type="transmembrane region" description="Helical" evidence="1">
    <location>
        <begin position="105"/>
        <end position="126"/>
    </location>
</feature>
<feature type="transmembrane region" description="Helical" evidence="1">
    <location>
        <begin position="134"/>
        <end position="154"/>
    </location>
</feature>
<feature type="transmembrane region" description="Helical" evidence="1">
    <location>
        <begin position="175"/>
        <end position="195"/>
    </location>
</feature>
<feature type="transmembrane region" description="Helical" evidence="1">
    <location>
        <begin position="201"/>
        <end position="221"/>
    </location>
</feature>
<feature type="transmembrane region" description="Helical" evidence="1">
    <location>
        <begin position="258"/>
        <end position="278"/>
    </location>
</feature>
<feature type="transmembrane region" description="Helical" evidence="1">
    <location>
        <begin position="290"/>
        <end position="310"/>
    </location>
</feature>
<feature type="transmembrane region" description="Helical" evidence="1">
    <location>
        <begin position="326"/>
        <end position="346"/>
    </location>
</feature>
<feature type="transmembrane region" description="Helical" evidence="1">
    <location>
        <begin position="349"/>
        <end position="369"/>
    </location>
</feature>
<feature type="transmembrane region" description="Helical" evidence="1">
    <location>
        <begin position="388"/>
        <end position="408"/>
    </location>
</feature>
<feature type="transmembrane region" description="Helical" evidence="1">
    <location>
        <begin position="428"/>
        <end position="448"/>
    </location>
</feature>
<feature type="region of interest" description="Disordered" evidence="2">
    <location>
        <begin position="1"/>
        <end position="20"/>
    </location>
</feature>
<comment type="subcellular location">
    <subcellularLocation>
        <location evidence="3">Membrane</location>
        <topology evidence="3">Multi-pass membrane protein</topology>
    </subcellularLocation>
</comment>
<comment type="similarity">
    <text evidence="3">Belongs to the major facilitator superfamily.</text>
</comment>
<proteinExistence type="evidence at transcript level"/>
<reference key="1">
    <citation type="submission" date="2005-05" db="EMBL/GenBank/DDBJ databases">
        <authorList>
            <consortium name="NIH - Zebrafish Gene Collection (ZGC) project"/>
        </authorList>
    </citation>
    <scope>NUCLEOTIDE SEQUENCE [LARGE SCALE MRNA]</scope>
    <source>
        <tissue>Olfactory epithelium</tissue>
    </source>
</reference>
<organism>
    <name type="scientific">Danio rerio</name>
    <name type="common">Zebrafish</name>
    <name type="synonym">Brachydanio rerio</name>
    <dbReference type="NCBI Taxonomy" id="7955"/>
    <lineage>
        <taxon>Eukaryota</taxon>
        <taxon>Metazoa</taxon>
        <taxon>Chordata</taxon>
        <taxon>Craniata</taxon>
        <taxon>Vertebrata</taxon>
        <taxon>Euteleostomi</taxon>
        <taxon>Actinopterygii</taxon>
        <taxon>Neopterygii</taxon>
        <taxon>Teleostei</taxon>
        <taxon>Ostariophysi</taxon>
        <taxon>Cypriniformes</taxon>
        <taxon>Danionidae</taxon>
        <taxon>Danioninae</taxon>
        <taxon>Danio</taxon>
    </lineage>
</organism>
<protein>
    <recommendedName>
        <fullName>Solute carrier family 49 member A3</fullName>
    </recommendedName>
    <alternativeName>
        <fullName>Major facilitator superfamily domain-containing protein 7</fullName>
    </alternativeName>
</protein>
<gene>
    <name type="primary">slc49a3</name>
    <name type="synonym">mfsd7</name>
    <name type="ORF">zgc:110376</name>
</gene>
<name>S49A3_DANRE</name>
<keyword id="KW-0472">Membrane</keyword>
<keyword id="KW-1185">Reference proteome</keyword>
<keyword id="KW-0812">Transmembrane</keyword>
<keyword id="KW-1133">Transmembrane helix</keyword>
<keyword id="KW-0813">Transport</keyword>
<sequence length="474" mass="50190">MEGESAETEPLIQSSSAADRPDPAAEAAARFTVYRRRWFILSVLCLLNCSNAMAWLTFAPVAGQSAQLLCVSLPLVNWLSLVFVLAAVVCSFSSMWVLDTLGLRCSLIGSSWLNACGCVLRVCGVLSVTPQWAVFAVVMCGQTLCALAQPLVIFAPTKLAALWFPDHQRATANMLASMANTVGLLLANLLSPLIVSYSGDLFLLLLIYSIPAAVACLLATLGIHQAVPPTPASASSSSSASEPFLQGIRQLLRNRAYWILLLCFGSGIGIFTCFSTLLEQILCVKGYSNGFAGVCGAVSIVCGVAGAFLLSLYVDRSKKFMEVMKICMCLTSVSCSAFAVVSQLPAQSVLLVLVCCCFGLFGYSVYPVGMELSVETTHPLGEATSAGLIFTSGQIQAALYLLLLQALATPTHSPTSVCAADTSLNWTVPVLVMAGVCAISSCVFVVFFHTEYRRLRAEADSATEPEPTGDAADA</sequence>
<evidence type="ECO:0000255" key="1"/>
<evidence type="ECO:0000256" key="2">
    <source>
        <dbReference type="SAM" id="MobiDB-lite"/>
    </source>
</evidence>
<evidence type="ECO:0000305" key="3"/>
<accession>Q503P5</accession>